<proteinExistence type="inferred from homology"/>
<accession>Q7T044</accession>
<sequence>MADFDMVLKCWGPVEADHATHGSLVLTRLFTEHPETLKLFPKFAGIAHGDLAGDAGVSAHGATVLKKLGDLLKARGGHAALLKPLSSSHATKHKIPIINFKLIAEVIGKVMEEKAGLDAAGQTALRNVMAIIITDMEADYKELGFTE</sequence>
<comment type="function">
    <text evidence="2">Monomeric heme protein which primary function is to store oxygen and facilitate its diffusion within muscle tissues. Reversibly binds oxygen through a pentacoordinated heme iron and enables its timely and efficient release as needed during periods of heightened demand. Depending on the oxidative conditions of tissues and cells, and in addition to its ability to bind oxygen, it also has a nitrite reductase activity whereby it regulates the production of bioactive nitric oxide. Under stress conditions, like hypoxia and anoxia, it also protects cells against reactive oxygen species thanks to its pseudoperoxidase activity.</text>
</comment>
<comment type="catalytic activity">
    <reaction evidence="2">
        <text>Fe(III)-heme b-[protein] + nitric oxide + H2O = Fe(II)-heme b-[protein] + nitrite + 2 H(+)</text>
        <dbReference type="Rhea" id="RHEA:77711"/>
        <dbReference type="Rhea" id="RHEA-COMP:18975"/>
        <dbReference type="Rhea" id="RHEA-COMP:18976"/>
        <dbReference type="ChEBI" id="CHEBI:15377"/>
        <dbReference type="ChEBI" id="CHEBI:15378"/>
        <dbReference type="ChEBI" id="CHEBI:16301"/>
        <dbReference type="ChEBI" id="CHEBI:16480"/>
        <dbReference type="ChEBI" id="CHEBI:55376"/>
        <dbReference type="ChEBI" id="CHEBI:60344"/>
    </reaction>
    <physiologicalReaction direction="right-to-left" evidence="2">
        <dbReference type="Rhea" id="RHEA:77713"/>
    </physiologicalReaction>
</comment>
<comment type="catalytic activity">
    <reaction evidence="2">
        <text>H2O2 + AH2 = A + 2 H2O</text>
        <dbReference type="Rhea" id="RHEA:30275"/>
        <dbReference type="ChEBI" id="CHEBI:13193"/>
        <dbReference type="ChEBI" id="CHEBI:15377"/>
        <dbReference type="ChEBI" id="CHEBI:16240"/>
        <dbReference type="ChEBI" id="CHEBI:17499"/>
    </reaction>
</comment>
<comment type="subunit">
    <text evidence="3">Monomeric.</text>
</comment>
<comment type="subcellular location">
    <subcellularLocation>
        <location evidence="2">Cytoplasm</location>
        <location evidence="2">Sarcoplasm</location>
    </subcellularLocation>
</comment>
<comment type="similarity">
    <text evidence="6">Belongs to the globin family.</text>
</comment>
<evidence type="ECO:0000250" key="1"/>
<evidence type="ECO:0000250" key="2">
    <source>
        <dbReference type="UniProtKB" id="P02144"/>
    </source>
</evidence>
<evidence type="ECO:0000250" key="3">
    <source>
        <dbReference type="UniProtKB" id="P02185"/>
    </source>
</evidence>
<evidence type="ECO:0000250" key="4">
    <source>
        <dbReference type="UniProtKB" id="P02189"/>
    </source>
</evidence>
<evidence type="ECO:0000250" key="5">
    <source>
        <dbReference type="UniProtKB" id="P68082"/>
    </source>
</evidence>
<evidence type="ECO:0000255" key="6">
    <source>
        <dbReference type="PROSITE-ProRule" id="PRU00238"/>
    </source>
</evidence>
<name>MYG_CHARH</name>
<feature type="initiator methionine" description="Removed" evidence="1">
    <location>
        <position position="1"/>
    </location>
</feature>
<feature type="chain" id="PRO_0000053361" description="Myoglobin">
    <location>
        <begin position="2"/>
        <end position="147"/>
    </location>
</feature>
<feature type="domain" description="Globin" evidence="6">
    <location>
        <begin position="2"/>
        <end position="141"/>
    </location>
</feature>
<feature type="binding site" evidence="5">
    <location>
        <position position="60"/>
    </location>
    <ligand>
        <name>nitrite</name>
        <dbReference type="ChEBI" id="CHEBI:16301"/>
    </ligand>
</feature>
<feature type="binding site" evidence="4 6">
    <location>
        <position position="60"/>
    </location>
    <ligand>
        <name>O2</name>
        <dbReference type="ChEBI" id="CHEBI:15379"/>
    </ligand>
</feature>
<feature type="binding site" description="proximal binding residue" evidence="2">
    <location>
        <position position="89"/>
    </location>
    <ligand>
        <name>heme b</name>
        <dbReference type="ChEBI" id="CHEBI:60344"/>
    </ligand>
    <ligandPart>
        <name>Fe</name>
        <dbReference type="ChEBI" id="CHEBI:18248"/>
    </ligandPart>
</feature>
<dbReference type="EC" id="1.7.-.-" evidence="2"/>
<dbReference type="EC" id="1.11.1.-" evidence="2"/>
<dbReference type="EMBL" id="AY341058">
    <property type="protein sequence ID" value="AAQ17544.1"/>
    <property type="molecule type" value="Genomic_DNA"/>
</dbReference>
<dbReference type="SMR" id="Q7T044"/>
<dbReference type="GO" id="GO:0070062">
    <property type="term" value="C:extracellular exosome"/>
    <property type="evidence" value="ECO:0007669"/>
    <property type="project" value="TreeGrafter"/>
</dbReference>
<dbReference type="GO" id="GO:0016528">
    <property type="term" value="C:sarcoplasm"/>
    <property type="evidence" value="ECO:0000250"/>
    <property type="project" value="UniProtKB"/>
</dbReference>
<dbReference type="GO" id="GO:0020037">
    <property type="term" value="F:heme binding"/>
    <property type="evidence" value="ECO:0007669"/>
    <property type="project" value="InterPro"/>
</dbReference>
<dbReference type="GO" id="GO:0046872">
    <property type="term" value="F:metal ion binding"/>
    <property type="evidence" value="ECO:0007669"/>
    <property type="project" value="UniProtKB-KW"/>
</dbReference>
<dbReference type="GO" id="GO:0098809">
    <property type="term" value="F:nitrite reductase activity"/>
    <property type="evidence" value="ECO:0000250"/>
    <property type="project" value="UniProtKB"/>
</dbReference>
<dbReference type="GO" id="GO:0019825">
    <property type="term" value="F:oxygen binding"/>
    <property type="evidence" value="ECO:0007669"/>
    <property type="project" value="InterPro"/>
</dbReference>
<dbReference type="GO" id="GO:0005344">
    <property type="term" value="F:oxygen carrier activity"/>
    <property type="evidence" value="ECO:0000250"/>
    <property type="project" value="UniProtKB"/>
</dbReference>
<dbReference type="GO" id="GO:0004601">
    <property type="term" value="F:peroxidase activity"/>
    <property type="evidence" value="ECO:0000250"/>
    <property type="project" value="UniProtKB"/>
</dbReference>
<dbReference type="GO" id="GO:0019430">
    <property type="term" value="P:removal of superoxide radicals"/>
    <property type="evidence" value="ECO:0000250"/>
    <property type="project" value="UniProtKB"/>
</dbReference>
<dbReference type="Gene3D" id="6.10.140.2100">
    <property type="match status" value="1"/>
</dbReference>
<dbReference type="Gene3D" id="6.10.140.2110">
    <property type="match status" value="1"/>
</dbReference>
<dbReference type="InterPro" id="IPR000971">
    <property type="entry name" value="Globin"/>
</dbReference>
<dbReference type="InterPro" id="IPR009050">
    <property type="entry name" value="Globin-like_sf"/>
</dbReference>
<dbReference type="InterPro" id="IPR002335">
    <property type="entry name" value="Myoglobin"/>
</dbReference>
<dbReference type="PANTHER" id="PTHR47132">
    <property type="entry name" value="MYOGLOBIN"/>
    <property type="match status" value="1"/>
</dbReference>
<dbReference type="PANTHER" id="PTHR47132:SF1">
    <property type="entry name" value="MYOGLOBIN"/>
    <property type="match status" value="1"/>
</dbReference>
<dbReference type="Pfam" id="PF00042">
    <property type="entry name" value="Globin"/>
    <property type="match status" value="1"/>
</dbReference>
<dbReference type="PRINTS" id="PR00613">
    <property type="entry name" value="MYOGLOBIN"/>
</dbReference>
<dbReference type="SUPFAM" id="SSF46458">
    <property type="entry name" value="Globin-like"/>
    <property type="match status" value="1"/>
</dbReference>
<dbReference type="PROSITE" id="PS01033">
    <property type="entry name" value="GLOBIN"/>
    <property type="match status" value="1"/>
</dbReference>
<gene>
    <name type="primary">mb</name>
</gene>
<protein>
    <recommendedName>
        <fullName>Myoglobin</fullName>
    </recommendedName>
    <alternativeName>
        <fullName evidence="2">Nitrite reductase MB</fullName>
        <ecNumber evidence="2">1.7.-.-</ecNumber>
    </alternativeName>
    <alternativeName>
        <fullName evidence="2">Pseudoperoxidase MB</fullName>
        <ecNumber evidence="2">1.11.1.-</ecNumber>
    </alternativeName>
</protein>
<keyword id="KW-0963">Cytoplasm</keyword>
<keyword id="KW-0349">Heme</keyword>
<keyword id="KW-0408">Iron</keyword>
<keyword id="KW-0479">Metal-binding</keyword>
<keyword id="KW-0514">Muscle protein</keyword>
<keyword id="KW-0560">Oxidoreductase</keyword>
<keyword id="KW-0561">Oxygen transport</keyword>
<keyword id="KW-0813">Transport</keyword>
<reference key="1">
    <citation type="submission" date="2003-07" db="EMBL/GenBank/DDBJ databases">
        <title>Myoglobin gene sequence from the antarctic Notothenioid, Channichthys rhinoceratus.</title>
        <authorList>
            <person name="Grove T.J."/>
            <person name="Hendrickson J.W."/>
            <person name="Sidell B.D."/>
        </authorList>
    </citation>
    <scope>NUCLEOTIDE SEQUENCE [GENOMIC DNA]</scope>
</reference>
<organism>
    <name type="scientific">Channichthys rhinoceratus</name>
    <name type="common">Unicorn icefish</name>
    <dbReference type="NCBI Taxonomy" id="70438"/>
    <lineage>
        <taxon>Eukaryota</taxon>
        <taxon>Metazoa</taxon>
        <taxon>Chordata</taxon>
        <taxon>Craniata</taxon>
        <taxon>Vertebrata</taxon>
        <taxon>Euteleostomi</taxon>
        <taxon>Actinopterygii</taxon>
        <taxon>Neopterygii</taxon>
        <taxon>Teleostei</taxon>
        <taxon>Neoteleostei</taxon>
        <taxon>Acanthomorphata</taxon>
        <taxon>Eupercaria</taxon>
        <taxon>Perciformes</taxon>
        <taxon>Notothenioidei</taxon>
        <taxon>Channichthyidae</taxon>
        <taxon>Channichthys</taxon>
    </lineage>
</organism>